<organism>
    <name type="scientific">Nitrobacter winogradskyi (strain ATCC 25391 / DSM 10237 / CIP 104748 / NCIMB 11846 / Nb-255)</name>
    <dbReference type="NCBI Taxonomy" id="323098"/>
    <lineage>
        <taxon>Bacteria</taxon>
        <taxon>Pseudomonadati</taxon>
        <taxon>Pseudomonadota</taxon>
        <taxon>Alphaproteobacteria</taxon>
        <taxon>Hyphomicrobiales</taxon>
        <taxon>Nitrobacteraceae</taxon>
        <taxon>Nitrobacter</taxon>
    </lineage>
</organism>
<proteinExistence type="inferred from homology"/>
<name>TRMFO_NITWN</name>
<evidence type="ECO:0000255" key="1">
    <source>
        <dbReference type="HAMAP-Rule" id="MF_01037"/>
    </source>
</evidence>
<gene>
    <name evidence="1" type="primary">trmFO</name>
    <name type="ordered locus">Nwi_1764</name>
</gene>
<feature type="chain" id="PRO_0000346368" description="Methylenetetrahydrofolate--tRNA-(uracil-5-)-methyltransferase TrmFO">
    <location>
        <begin position="1"/>
        <end position="477"/>
    </location>
</feature>
<feature type="binding site" evidence="1">
    <location>
        <begin position="15"/>
        <end position="20"/>
    </location>
    <ligand>
        <name>FAD</name>
        <dbReference type="ChEBI" id="CHEBI:57692"/>
    </ligand>
</feature>
<reference key="1">
    <citation type="journal article" date="2006" name="Appl. Environ. Microbiol.">
        <title>Genome sequence of the chemolithoautotrophic nitrite-oxidizing bacterium Nitrobacter winogradskyi Nb-255.</title>
        <authorList>
            <person name="Starkenburg S.R."/>
            <person name="Chain P.S.G."/>
            <person name="Sayavedra-Soto L.A."/>
            <person name="Hauser L."/>
            <person name="Land M.L."/>
            <person name="Larimer F.W."/>
            <person name="Malfatti S.A."/>
            <person name="Klotz M.G."/>
            <person name="Bottomley P.J."/>
            <person name="Arp D.J."/>
            <person name="Hickey W.J."/>
        </authorList>
    </citation>
    <scope>NUCLEOTIDE SEQUENCE [LARGE SCALE GENOMIC DNA]</scope>
    <source>
        <strain>ATCC 25391 / DSM 10237 / CIP 104748 / NCIMB 11846 / Nb-255</strain>
    </source>
</reference>
<dbReference type="EC" id="2.1.1.74" evidence="1"/>
<dbReference type="EMBL" id="CP000115">
    <property type="protein sequence ID" value="ABA05025.1"/>
    <property type="molecule type" value="Genomic_DNA"/>
</dbReference>
<dbReference type="RefSeq" id="WP_011315021.1">
    <property type="nucleotide sequence ID" value="NC_007406.1"/>
</dbReference>
<dbReference type="SMR" id="Q3SRR6"/>
<dbReference type="STRING" id="323098.Nwi_1764"/>
<dbReference type="KEGG" id="nwi:Nwi_1764"/>
<dbReference type="eggNOG" id="COG1206">
    <property type="taxonomic scope" value="Bacteria"/>
</dbReference>
<dbReference type="HOGENOM" id="CLU_033057_1_0_5"/>
<dbReference type="OrthoDB" id="9803114at2"/>
<dbReference type="Proteomes" id="UP000002531">
    <property type="component" value="Chromosome"/>
</dbReference>
<dbReference type="GO" id="GO:0005829">
    <property type="term" value="C:cytosol"/>
    <property type="evidence" value="ECO:0007669"/>
    <property type="project" value="TreeGrafter"/>
</dbReference>
<dbReference type="GO" id="GO:0050660">
    <property type="term" value="F:flavin adenine dinucleotide binding"/>
    <property type="evidence" value="ECO:0007669"/>
    <property type="project" value="UniProtKB-UniRule"/>
</dbReference>
<dbReference type="GO" id="GO:0047151">
    <property type="term" value="F:tRNA (uracil(54)-C5)-methyltransferase activity, 5,10-methylenetetrahydrofolate-dependent"/>
    <property type="evidence" value="ECO:0007669"/>
    <property type="project" value="UniProtKB-UniRule"/>
</dbReference>
<dbReference type="GO" id="GO:0030488">
    <property type="term" value="P:tRNA methylation"/>
    <property type="evidence" value="ECO:0007669"/>
    <property type="project" value="TreeGrafter"/>
</dbReference>
<dbReference type="GO" id="GO:0002098">
    <property type="term" value="P:tRNA wobble uridine modification"/>
    <property type="evidence" value="ECO:0007669"/>
    <property type="project" value="TreeGrafter"/>
</dbReference>
<dbReference type="Gene3D" id="3.50.50.60">
    <property type="entry name" value="FAD/NAD(P)-binding domain"/>
    <property type="match status" value="2"/>
</dbReference>
<dbReference type="HAMAP" id="MF_01037">
    <property type="entry name" value="TrmFO"/>
    <property type="match status" value="1"/>
</dbReference>
<dbReference type="InterPro" id="IPR036188">
    <property type="entry name" value="FAD/NAD-bd_sf"/>
</dbReference>
<dbReference type="InterPro" id="IPR002218">
    <property type="entry name" value="MnmG-rel"/>
</dbReference>
<dbReference type="InterPro" id="IPR040131">
    <property type="entry name" value="MnmG_N"/>
</dbReference>
<dbReference type="InterPro" id="IPR004417">
    <property type="entry name" value="TrmFO"/>
</dbReference>
<dbReference type="NCBIfam" id="TIGR00137">
    <property type="entry name" value="gid_trmFO"/>
    <property type="match status" value="1"/>
</dbReference>
<dbReference type="NCBIfam" id="NF003739">
    <property type="entry name" value="PRK05335.1"/>
    <property type="match status" value="1"/>
</dbReference>
<dbReference type="PANTHER" id="PTHR11806">
    <property type="entry name" value="GLUCOSE INHIBITED DIVISION PROTEIN A"/>
    <property type="match status" value="1"/>
</dbReference>
<dbReference type="PANTHER" id="PTHR11806:SF2">
    <property type="entry name" value="METHYLENETETRAHYDROFOLATE--TRNA-(URACIL-5-)-METHYLTRANSFERASE TRMFO"/>
    <property type="match status" value="1"/>
</dbReference>
<dbReference type="Pfam" id="PF01134">
    <property type="entry name" value="GIDA"/>
    <property type="match status" value="1"/>
</dbReference>
<dbReference type="SUPFAM" id="SSF51905">
    <property type="entry name" value="FAD/NAD(P)-binding domain"/>
    <property type="match status" value="1"/>
</dbReference>
<comment type="function">
    <text evidence="1">Catalyzes the folate-dependent formation of 5-methyl-uridine at position 54 (M-5-U54) in all tRNAs.</text>
</comment>
<comment type="catalytic activity">
    <reaction evidence="1">
        <text>uridine(54) in tRNA + (6R)-5,10-methylene-5,6,7,8-tetrahydrofolate + NADH + H(+) = 5-methyluridine(54) in tRNA + (6S)-5,6,7,8-tetrahydrofolate + NAD(+)</text>
        <dbReference type="Rhea" id="RHEA:16873"/>
        <dbReference type="Rhea" id="RHEA-COMP:10167"/>
        <dbReference type="Rhea" id="RHEA-COMP:10193"/>
        <dbReference type="ChEBI" id="CHEBI:15378"/>
        <dbReference type="ChEBI" id="CHEBI:15636"/>
        <dbReference type="ChEBI" id="CHEBI:57453"/>
        <dbReference type="ChEBI" id="CHEBI:57540"/>
        <dbReference type="ChEBI" id="CHEBI:57945"/>
        <dbReference type="ChEBI" id="CHEBI:65315"/>
        <dbReference type="ChEBI" id="CHEBI:74447"/>
        <dbReference type="EC" id="2.1.1.74"/>
    </reaction>
</comment>
<comment type="catalytic activity">
    <reaction evidence="1">
        <text>uridine(54) in tRNA + (6R)-5,10-methylene-5,6,7,8-tetrahydrofolate + NADPH + H(+) = 5-methyluridine(54) in tRNA + (6S)-5,6,7,8-tetrahydrofolate + NADP(+)</text>
        <dbReference type="Rhea" id="RHEA:62372"/>
        <dbReference type="Rhea" id="RHEA-COMP:10167"/>
        <dbReference type="Rhea" id="RHEA-COMP:10193"/>
        <dbReference type="ChEBI" id="CHEBI:15378"/>
        <dbReference type="ChEBI" id="CHEBI:15636"/>
        <dbReference type="ChEBI" id="CHEBI:57453"/>
        <dbReference type="ChEBI" id="CHEBI:57783"/>
        <dbReference type="ChEBI" id="CHEBI:58349"/>
        <dbReference type="ChEBI" id="CHEBI:65315"/>
        <dbReference type="ChEBI" id="CHEBI:74447"/>
        <dbReference type="EC" id="2.1.1.74"/>
    </reaction>
</comment>
<comment type="cofactor">
    <cofactor evidence="1">
        <name>FAD</name>
        <dbReference type="ChEBI" id="CHEBI:57692"/>
    </cofactor>
</comment>
<comment type="subcellular location">
    <subcellularLocation>
        <location evidence="1">Cytoplasm</location>
    </subcellularLocation>
</comment>
<comment type="similarity">
    <text evidence="1">Belongs to the MnmG family. TrmFO subfamily.</text>
</comment>
<accession>Q3SRR6</accession>
<protein>
    <recommendedName>
        <fullName evidence="1">Methylenetetrahydrofolate--tRNA-(uracil-5-)-methyltransferase TrmFO</fullName>
        <ecNumber evidence="1">2.1.1.74</ecNumber>
    </recommendedName>
    <alternativeName>
        <fullName evidence="1">Folate-dependent tRNA (uracil-5-)-methyltransferase</fullName>
    </alternativeName>
    <alternativeName>
        <fullName evidence="1">Folate-dependent tRNA(M-5-U54)-methyltransferase</fullName>
    </alternativeName>
</protein>
<keyword id="KW-0963">Cytoplasm</keyword>
<keyword id="KW-0274">FAD</keyword>
<keyword id="KW-0285">Flavoprotein</keyword>
<keyword id="KW-0489">Methyltransferase</keyword>
<keyword id="KW-0520">NAD</keyword>
<keyword id="KW-0521">NADP</keyword>
<keyword id="KW-1185">Reference proteome</keyword>
<keyword id="KW-0808">Transferase</keyword>
<keyword id="KW-0819">tRNA processing</keyword>
<sequence>MTQFESSRATVHIVGAGLAGSEAAWQVAAQGVRVVLHEMRPHRMTAAHRTGGLAELVCSNSFRSDDASNNAVGLLHAEMRRLGSLVMRCADANQVPAGGALAVDRDGFSAAVTEALDNHPLIEIDRAEIDGLPPADWGNVIVATGPLTSTPLAAAIRALTDESALAFFDAIAPIVHRDSIDMSKAWFQSRYDKAGPGGSGADYINCPLSEAQYHAFVDALLEGEKVDFKDWETAPPYFDGCLPIEVMAERGRETLRYGPMKPVGLTNPHDPATKPYAVVQLRQDNKLGTLYNIVGFQTKLKHGAQTRIFRTIPGLEGAEFARLGGLHRNTFLNSPKLLDVRLRLRAEPRLRFAGQMTGCEGYVESAAIGLLGGLYAAADARSCTLEAPPQTTALGALLGHITGGHIETIDTGPRSFQPMNINFGLFPPLADPPTRKPDGTRLRGNEKTIAKKQAICARALSDLDRWIADALRPAAAA</sequence>